<feature type="chain" id="PRO_0000142520" description="Inositol monophosphatase 2">
    <location>
        <begin position="1"/>
        <end position="288"/>
    </location>
</feature>
<feature type="binding site" evidence="2">
    <location>
        <position position="81"/>
    </location>
    <ligand>
        <name>Mg(2+)</name>
        <dbReference type="ChEBI" id="CHEBI:18420"/>
        <label>1</label>
    </ligand>
</feature>
<feature type="binding site" evidence="5">
    <location>
        <position position="81"/>
    </location>
    <ligand>
        <name>substrate</name>
    </ligand>
</feature>
<feature type="binding site" evidence="2">
    <location>
        <position position="101"/>
    </location>
    <ligand>
        <name>Mg(2+)</name>
        <dbReference type="ChEBI" id="CHEBI:18420"/>
        <label>1</label>
    </ligand>
</feature>
<feature type="binding site" evidence="2">
    <location>
        <position position="101"/>
    </location>
    <ligand>
        <name>Mg(2+)</name>
        <dbReference type="ChEBI" id="CHEBI:18420"/>
        <label>2</label>
    </ligand>
</feature>
<feature type="binding site">
    <location>
        <begin position="103"/>
        <end position="106"/>
    </location>
    <ligand>
        <name>substrate</name>
    </ligand>
</feature>
<feature type="binding site" evidence="2">
    <location>
        <position position="103"/>
    </location>
    <ligand>
        <name>Mg(2+)</name>
        <dbReference type="ChEBI" id="CHEBI:18420"/>
        <label>1</label>
    </ligand>
</feature>
<feature type="binding site" evidence="2">
    <location>
        <position position="104"/>
    </location>
    <ligand>
        <name>Mg(2+)</name>
        <dbReference type="ChEBI" id="CHEBI:18420"/>
        <label>2</label>
    </ligand>
</feature>
<feature type="binding site">
    <location>
        <begin position="205"/>
        <end position="207"/>
    </location>
    <ligand>
        <name>substrate</name>
    </ligand>
</feature>
<feature type="binding site" evidence="5">
    <location>
        <position position="224"/>
    </location>
    <ligand>
        <name>substrate</name>
    </ligand>
</feature>
<feature type="binding site" evidence="2">
    <location>
        <position position="231"/>
    </location>
    <ligand>
        <name>Mg(2+)</name>
        <dbReference type="ChEBI" id="CHEBI:18420"/>
        <label>2</label>
    </ligand>
</feature>
<feature type="binding site" evidence="1">
    <location>
        <position position="231"/>
    </location>
    <ligand>
        <name>substrate</name>
    </ligand>
</feature>
<feature type="splice variant" id="VSP_013674" description="In isoform 2." evidence="6">
    <original>EDQAALAAGPWEECFQAAVQLALRAGQII</original>
    <variation>QD</variation>
    <location>
        <begin position="6"/>
        <end position="34"/>
    </location>
</feature>
<feature type="sequence variant" id="VAR_049601" description="In dbSNP:rs16976948.">
    <original>A</original>
    <variation>T</variation>
    <location>
        <position position="88"/>
    </location>
</feature>
<feature type="mutagenesis site" description="Loss of activity." evidence="4">
    <original>D</original>
    <variation>N</variation>
    <location>
        <position position="104"/>
    </location>
</feature>
<feature type="helix" evidence="11">
    <location>
        <begin position="17"/>
        <end position="38"/>
    </location>
</feature>
<feature type="helix" evidence="11">
    <location>
        <begin position="56"/>
        <end position="70"/>
    </location>
</feature>
<feature type="strand" evidence="10">
    <location>
        <begin position="77"/>
        <end position="84"/>
    </location>
</feature>
<feature type="strand" evidence="11">
    <location>
        <begin position="97"/>
        <end position="104"/>
    </location>
</feature>
<feature type="helix" evidence="11">
    <location>
        <begin position="106"/>
        <end position="110"/>
    </location>
</feature>
<feature type="strand" evidence="11">
    <location>
        <begin position="117"/>
        <end position="124"/>
    </location>
</feature>
<feature type="strand" evidence="11">
    <location>
        <begin position="127"/>
        <end position="135"/>
    </location>
</feature>
<feature type="turn" evidence="11">
    <location>
        <begin position="136"/>
        <end position="139"/>
    </location>
</feature>
<feature type="strand" evidence="11">
    <location>
        <begin position="140"/>
        <end position="145"/>
    </location>
</feature>
<feature type="turn" evidence="10">
    <location>
        <begin position="146"/>
        <end position="148"/>
    </location>
</feature>
<feature type="strand" evidence="11">
    <location>
        <begin position="150"/>
        <end position="152"/>
    </location>
</feature>
<feature type="helix" evidence="11">
    <location>
        <begin position="165"/>
        <end position="167"/>
    </location>
</feature>
<feature type="strand" evidence="11">
    <location>
        <begin position="169"/>
        <end position="171"/>
    </location>
</feature>
<feature type="helix" evidence="11">
    <location>
        <begin position="180"/>
        <end position="195"/>
    </location>
</feature>
<feature type="strand" evidence="11">
    <location>
        <begin position="199"/>
        <end position="203"/>
    </location>
</feature>
<feature type="helix" evidence="11">
    <location>
        <begin position="207"/>
        <end position="215"/>
    </location>
</feature>
<feature type="strand" evidence="11">
    <location>
        <begin position="220"/>
        <end position="226"/>
    </location>
</feature>
<feature type="helix" evidence="11">
    <location>
        <begin position="229"/>
        <end position="231"/>
    </location>
</feature>
<feature type="helix" evidence="11">
    <location>
        <begin position="233"/>
        <end position="241"/>
    </location>
</feature>
<feature type="strand" evidence="11">
    <location>
        <begin position="245"/>
        <end position="247"/>
    </location>
</feature>
<feature type="strand" evidence="10">
    <location>
        <begin position="251"/>
        <end position="253"/>
    </location>
</feature>
<feature type="helix" evidence="11">
    <location>
        <begin position="256"/>
        <end position="258"/>
    </location>
</feature>
<feature type="strand" evidence="11">
    <location>
        <begin position="260"/>
        <end position="266"/>
    </location>
</feature>
<feature type="helix" evidence="11">
    <location>
        <begin position="267"/>
        <end position="275"/>
    </location>
</feature>
<organism>
    <name type="scientific">Homo sapiens</name>
    <name type="common">Human</name>
    <dbReference type="NCBI Taxonomy" id="9606"/>
    <lineage>
        <taxon>Eukaryota</taxon>
        <taxon>Metazoa</taxon>
        <taxon>Chordata</taxon>
        <taxon>Craniata</taxon>
        <taxon>Vertebrata</taxon>
        <taxon>Euteleostomi</taxon>
        <taxon>Mammalia</taxon>
        <taxon>Eutheria</taxon>
        <taxon>Euarchontoglires</taxon>
        <taxon>Primates</taxon>
        <taxon>Haplorrhini</taxon>
        <taxon>Catarrhini</taxon>
        <taxon>Hominidae</taxon>
        <taxon>Homo</taxon>
    </lineage>
</organism>
<name>IMPA2_HUMAN</name>
<accession>O14732</accession>
<accession>B0YJ29</accession>
<accession>Q9UJT3</accession>
<evidence type="ECO:0000250" key="1"/>
<evidence type="ECO:0000250" key="2">
    <source>
        <dbReference type="UniProtKB" id="P29218"/>
    </source>
</evidence>
<evidence type="ECO:0000269" key="3">
    <source>
    </source>
</evidence>
<evidence type="ECO:0000269" key="4">
    <source>
    </source>
</evidence>
<evidence type="ECO:0000269" key="5">
    <source>
    </source>
</evidence>
<evidence type="ECO:0000303" key="6">
    <source ref="3"/>
</evidence>
<evidence type="ECO:0000305" key="7"/>
<evidence type="ECO:0000305" key="8">
    <source>
    </source>
</evidence>
<evidence type="ECO:0000312" key="9">
    <source>
        <dbReference type="HGNC" id="HGNC:6051"/>
    </source>
</evidence>
<evidence type="ECO:0007829" key="10">
    <source>
        <dbReference type="PDB" id="2CZH"/>
    </source>
</evidence>
<evidence type="ECO:0007829" key="11">
    <source>
        <dbReference type="PDB" id="2FVZ"/>
    </source>
</evidence>
<sequence length="288" mass="31321">MKPSGEDQAALAAGPWEECFQAAVQLALRAGQIIRKALTEEKRVSTKTSAADLVTETDHLVEDLIISELRERFPSHRFIAEEAAASGAKCVLTHSPTWIIDPIDGTCNFVHRFPTVAVSIGFAVRQELEFGVIYHCTEERLYTGRRGRGAFCNGQRLRVSGETDLSKALVLTEIGPKRDPATLKLFLSNMERLLHAKAHGVRVIGSSTLALCHLASGAADAYYQFGLHCWDLAAATVIIREAGGIVIDTSGGPLDLMACRVVAASTREMAMLIAQALQTINYGRDDEK</sequence>
<dbReference type="EC" id="3.1.3.25" evidence="4"/>
<dbReference type="EMBL" id="AF014398">
    <property type="protein sequence ID" value="AAB70915.1"/>
    <property type="molecule type" value="mRNA"/>
</dbReference>
<dbReference type="EMBL" id="AF157102">
    <property type="protein sequence ID" value="AAD40683.1"/>
    <property type="molecule type" value="Genomic_DNA"/>
</dbReference>
<dbReference type="EMBL" id="AF157096">
    <property type="protein sequence ID" value="AAD40683.1"/>
    <property type="status" value="JOINED"/>
    <property type="molecule type" value="Genomic_DNA"/>
</dbReference>
<dbReference type="EMBL" id="AF157097">
    <property type="protein sequence ID" value="AAD40683.1"/>
    <property type="status" value="JOINED"/>
    <property type="molecule type" value="Genomic_DNA"/>
</dbReference>
<dbReference type="EMBL" id="AF157098">
    <property type="protein sequence ID" value="AAD40683.1"/>
    <property type="status" value="JOINED"/>
    <property type="molecule type" value="Genomic_DNA"/>
</dbReference>
<dbReference type="EMBL" id="AF157099">
    <property type="protein sequence ID" value="AAD40683.1"/>
    <property type="status" value="JOINED"/>
    <property type="molecule type" value="Genomic_DNA"/>
</dbReference>
<dbReference type="EMBL" id="AF157100">
    <property type="protein sequence ID" value="AAD40683.1"/>
    <property type="status" value="JOINED"/>
    <property type="molecule type" value="Genomic_DNA"/>
</dbReference>
<dbReference type="EMBL" id="AF157101">
    <property type="protein sequence ID" value="AAD40683.1"/>
    <property type="status" value="JOINED"/>
    <property type="molecule type" value="Genomic_DNA"/>
</dbReference>
<dbReference type="EMBL" id="AF200432">
    <property type="protein sequence ID" value="AAF07824.1"/>
    <property type="molecule type" value="mRNA"/>
</dbReference>
<dbReference type="EMBL" id="BT007061">
    <property type="protein sequence ID" value="AAP35710.1"/>
    <property type="molecule type" value="mRNA"/>
</dbReference>
<dbReference type="EMBL" id="EF444990">
    <property type="protein sequence ID" value="ACA06007.1"/>
    <property type="molecule type" value="Genomic_DNA"/>
</dbReference>
<dbReference type="EMBL" id="CH471113">
    <property type="protein sequence ID" value="EAX01559.1"/>
    <property type="molecule type" value="Genomic_DNA"/>
</dbReference>
<dbReference type="EMBL" id="BC017176">
    <property type="protein sequence ID" value="AAH17176.1"/>
    <property type="molecule type" value="mRNA"/>
</dbReference>
<dbReference type="CCDS" id="CCDS11855.1">
    <molecule id="O14732-1"/>
</dbReference>
<dbReference type="RefSeq" id="NP_055029.1">
    <molecule id="O14732-1"/>
    <property type="nucleotide sequence ID" value="NM_014214.3"/>
</dbReference>
<dbReference type="PDB" id="2CZH">
    <property type="method" value="X-ray"/>
    <property type="resolution" value="2.70 A"/>
    <property type="chains" value="A/B=1-288"/>
</dbReference>
<dbReference type="PDB" id="2CZI">
    <property type="method" value="X-ray"/>
    <property type="resolution" value="3.00 A"/>
    <property type="chains" value="A=1-288"/>
</dbReference>
<dbReference type="PDB" id="2CZK">
    <property type="method" value="X-ray"/>
    <property type="resolution" value="2.90 A"/>
    <property type="chains" value="A=1-288"/>
</dbReference>
<dbReference type="PDB" id="2DDK">
    <property type="method" value="X-ray"/>
    <property type="resolution" value="2.70 A"/>
    <property type="chains" value="A/B=1-288"/>
</dbReference>
<dbReference type="PDB" id="2FVZ">
    <property type="method" value="X-ray"/>
    <property type="resolution" value="2.40 A"/>
    <property type="chains" value="A/B/C/D=16-288"/>
</dbReference>
<dbReference type="PDBsum" id="2CZH"/>
<dbReference type="PDBsum" id="2CZI"/>
<dbReference type="PDBsum" id="2CZK"/>
<dbReference type="PDBsum" id="2DDK"/>
<dbReference type="PDBsum" id="2FVZ"/>
<dbReference type="SMR" id="O14732"/>
<dbReference type="BioGRID" id="109826">
    <property type="interactions" value="96"/>
</dbReference>
<dbReference type="FunCoup" id="O14732">
    <property type="interactions" value="871"/>
</dbReference>
<dbReference type="IntAct" id="O14732">
    <property type="interactions" value="40"/>
</dbReference>
<dbReference type="MINT" id="O14732"/>
<dbReference type="STRING" id="9606.ENSP00000269159"/>
<dbReference type="DrugBank" id="DB14509">
    <property type="generic name" value="Lithium carbonate"/>
</dbReference>
<dbReference type="DrugBank" id="DB01356">
    <property type="generic name" value="Lithium cation"/>
</dbReference>
<dbReference type="DrugBank" id="DB14507">
    <property type="generic name" value="Lithium citrate"/>
</dbReference>
<dbReference type="DrugBank" id="DB14508">
    <property type="generic name" value="Lithium succinate"/>
</dbReference>
<dbReference type="DEPOD" id="IMPA2"/>
<dbReference type="iPTMnet" id="O14732"/>
<dbReference type="PhosphoSitePlus" id="O14732"/>
<dbReference type="BioMuta" id="IMPA2"/>
<dbReference type="jPOST" id="O14732"/>
<dbReference type="MassIVE" id="O14732"/>
<dbReference type="PaxDb" id="9606-ENSP00000269159"/>
<dbReference type="PeptideAtlas" id="O14732"/>
<dbReference type="ProteomicsDB" id="48190">
    <molecule id="O14732-1"/>
</dbReference>
<dbReference type="ProteomicsDB" id="48191">
    <molecule id="O14732-2"/>
</dbReference>
<dbReference type="Pumba" id="O14732"/>
<dbReference type="TopDownProteomics" id="O14732-2">
    <molecule id="O14732-2"/>
</dbReference>
<dbReference type="Antibodypedia" id="21936">
    <property type="antibodies" value="85 antibodies from 22 providers"/>
</dbReference>
<dbReference type="DNASU" id="3613"/>
<dbReference type="Ensembl" id="ENST00000269159.8">
    <molecule id="O14732-1"/>
    <property type="protein sequence ID" value="ENSP00000269159.3"/>
    <property type="gene ID" value="ENSG00000141401.12"/>
</dbReference>
<dbReference type="GeneID" id="3613"/>
<dbReference type="KEGG" id="hsa:3613"/>
<dbReference type="MANE-Select" id="ENST00000269159.8">
    <property type="protein sequence ID" value="ENSP00000269159.3"/>
    <property type="RefSeq nucleotide sequence ID" value="NM_014214.3"/>
    <property type="RefSeq protein sequence ID" value="NP_055029.1"/>
</dbReference>
<dbReference type="UCSC" id="uc002kqp.3">
    <molecule id="O14732-1"/>
    <property type="organism name" value="human"/>
</dbReference>
<dbReference type="AGR" id="HGNC:6051"/>
<dbReference type="CTD" id="3613"/>
<dbReference type="DisGeNET" id="3613"/>
<dbReference type="GeneCards" id="IMPA2"/>
<dbReference type="HGNC" id="HGNC:6051">
    <property type="gene designation" value="IMPA2"/>
</dbReference>
<dbReference type="HPA" id="ENSG00000141401">
    <property type="expression patterns" value="Tissue enhanced (pancreas, skeletal muscle)"/>
</dbReference>
<dbReference type="MIM" id="605922">
    <property type="type" value="gene"/>
</dbReference>
<dbReference type="neXtProt" id="NX_O14732"/>
<dbReference type="OpenTargets" id="ENSG00000141401"/>
<dbReference type="PharmGKB" id="PA29861"/>
<dbReference type="VEuPathDB" id="HostDB:ENSG00000141401"/>
<dbReference type="eggNOG" id="KOG2951">
    <property type="taxonomic scope" value="Eukaryota"/>
</dbReference>
<dbReference type="GeneTree" id="ENSGT00940000160536"/>
<dbReference type="HOGENOM" id="CLU_044118_1_0_1"/>
<dbReference type="InParanoid" id="O14732"/>
<dbReference type="OMA" id="QTIHYGR"/>
<dbReference type="OrthoDB" id="10254945at2759"/>
<dbReference type="PAN-GO" id="O14732">
    <property type="GO annotations" value="4 GO annotations based on evolutionary models"/>
</dbReference>
<dbReference type="PhylomeDB" id="O14732"/>
<dbReference type="TreeFam" id="TF313194"/>
<dbReference type="BioCyc" id="MetaCyc:HS06822-MONOMER"/>
<dbReference type="PathwayCommons" id="O14732"/>
<dbReference type="Reactome" id="R-HSA-1855183">
    <property type="pathway name" value="Synthesis of IP2, IP, and Ins in the cytosol"/>
</dbReference>
<dbReference type="SignaLink" id="O14732"/>
<dbReference type="UniPathway" id="UPA00823">
    <property type="reaction ID" value="UER00788"/>
</dbReference>
<dbReference type="BioGRID-ORCS" id="3613">
    <property type="hits" value="17 hits in 1185 CRISPR screens"/>
</dbReference>
<dbReference type="ChiTaRS" id="IMPA2">
    <property type="organism name" value="human"/>
</dbReference>
<dbReference type="EvolutionaryTrace" id="O14732"/>
<dbReference type="GeneWiki" id="IMPA2"/>
<dbReference type="GenomeRNAi" id="3613"/>
<dbReference type="Pharos" id="O14732">
    <property type="development level" value="Tbio"/>
</dbReference>
<dbReference type="PRO" id="PR:O14732"/>
<dbReference type="Proteomes" id="UP000005640">
    <property type="component" value="Chromosome 18"/>
</dbReference>
<dbReference type="RNAct" id="O14732">
    <property type="molecule type" value="protein"/>
</dbReference>
<dbReference type="Bgee" id="ENSG00000141401">
    <property type="expression patterns" value="Expressed in body of pancreas and 174 other cell types or tissues"/>
</dbReference>
<dbReference type="ExpressionAtlas" id="O14732">
    <property type="expression patterns" value="baseline and differential"/>
</dbReference>
<dbReference type="GO" id="GO:0005737">
    <property type="term" value="C:cytoplasm"/>
    <property type="evidence" value="ECO:0000314"/>
    <property type="project" value="MGI"/>
</dbReference>
<dbReference type="GO" id="GO:0005829">
    <property type="term" value="C:cytosol"/>
    <property type="evidence" value="ECO:0000304"/>
    <property type="project" value="Reactome"/>
</dbReference>
<dbReference type="GO" id="GO:0008877">
    <property type="term" value="F:glucose-1-phosphatase activity"/>
    <property type="evidence" value="ECO:0007669"/>
    <property type="project" value="RHEA"/>
</dbReference>
<dbReference type="GO" id="GO:0047954">
    <property type="term" value="F:glycerol-2-phosphatase activity"/>
    <property type="evidence" value="ECO:0007669"/>
    <property type="project" value="RHEA"/>
</dbReference>
<dbReference type="GO" id="GO:0008934">
    <property type="term" value="F:inositol monophosphate 1-phosphatase activity"/>
    <property type="evidence" value="ECO:0000314"/>
    <property type="project" value="MGI"/>
</dbReference>
<dbReference type="GO" id="GO:0052832">
    <property type="term" value="F:inositol monophosphate 3-phosphatase activity"/>
    <property type="evidence" value="ECO:0007669"/>
    <property type="project" value="RHEA"/>
</dbReference>
<dbReference type="GO" id="GO:0052833">
    <property type="term" value="F:inositol monophosphate 4-phosphatase activity"/>
    <property type="evidence" value="ECO:0007669"/>
    <property type="project" value="RHEA"/>
</dbReference>
<dbReference type="GO" id="GO:0046872">
    <property type="term" value="F:metal ion binding"/>
    <property type="evidence" value="ECO:0007669"/>
    <property type="project" value="UniProtKB-KW"/>
</dbReference>
<dbReference type="GO" id="GO:0042803">
    <property type="term" value="F:protein homodimerization activity"/>
    <property type="evidence" value="ECO:0000314"/>
    <property type="project" value="MGI"/>
</dbReference>
<dbReference type="GO" id="GO:0006021">
    <property type="term" value="P:inositol biosynthetic process"/>
    <property type="evidence" value="ECO:0007669"/>
    <property type="project" value="UniProtKB-UniPathway"/>
</dbReference>
<dbReference type="GO" id="GO:0006020">
    <property type="term" value="P:inositol metabolic process"/>
    <property type="evidence" value="ECO:0000318"/>
    <property type="project" value="GO_Central"/>
</dbReference>
<dbReference type="GO" id="GO:0006796">
    <property type="term" value="P:phosphate-containing compound metabolic process"/>
    <property type="evidence" value="ECO:0000304"/>
    <property type="project" value="ProtInc"/>
</dbReference>
<dbReference type="GO" id="GO:0046854">
    <property type="term" value="P:phosphatidylinositol phosphate biosynthetic process"/>
    <property type="evidence" value="ECO:0007669"/>
    <property type="project" value="InterPro"/>
</dbReference>
<dbReference type="GO" id="GO:0010226">
    <property type="term" value="P:response to lithium ion"/>
    <property type="evidence" value="ECO:0000314"/>
    <property type="project" value="UniProtKB"/>
</dbReference>
<dbReference type="GO" id="GO:0007165">
    <property type="term" value="P:signal transduction"/>
    <property type="evidence" value="ECO:0000318"/>
    <property type="project" value="GO_Central"/>
</dbReference>
<dbReference type="CDD" id="cd01639">
    <property type="entry name" value="IMPase"/>
    <property type="match status" value="1"/>
</dbReference>
<dbReference type="FunFam" id="3.30.540.10:FF:000004">
    <property type="entry name" value="Inositol-1-monophosphatase"/>
    <property type="match status" value="1"/>
</dbReference>
<dbReference type="FunFam" id="3.40.190.80:FF:000002">
    <property type="entry name" value="Inositol-1-monophosphatase"/>
    <property type="match status" value="1"/>
</dbReference>
<dbReference type="Gene3D" id="3.40.190.80">
    <property type="match status" value="1"/>
</dbReference>
<dbReference type="Gene3D" id="3.30.540.10">
    <property type="entry name" value="Fructose-1,6-Bisphosphatase, subunit A, domain 1"/>
    <property type="match status" value="1"/>
</dbReference>
<dbReference type="InterPro" id="IPR033942">
    <property type="entry name" value="IMPase"/>
</dbReference>
<dbReference type="InterPro" id="IPR020583">
    <property type="entry name" value="Inositol_monoP_metal-BS"/>
</dbReference>
<dbReference type="InterPro" id="IPR020552">
    <property type="entry name" value="Inositol_monoPase_Li-sen"/>
</dbReference>
<dbReference type="InterPro" id="IPR000760">
    <property type="entry name" value="Inositol_monophosphatase-like"/>
</dbReference>
<dbReference type="InterPro" id="IPR020550">
    <property type="entry name" value="Inositol_monophosphatase_CS"/>
</dbReference>
<dbReference type="PANTHER" id="PTHR20854">
    <property type="entry name" value="INOSITOL MONOPHOSPHATASE"/>
    <property type="match status" value="1"/>
</dbReference>
<dbReference type="PANTHER" id="PTHR20854:SF29">
    <property type="entry name" value="INOSITOL MONOPHOSPHATASE 2"/>
    <property type="match status" value="1"/>
</dbReference>
<dbReference type="Pfam" id="PF00459">
    <property type="entry name" value="Inositol_P"/>
    <property type="match status" value="1"/>
</dbReference>
<dbReference type="PRINTS" id="PR00377">
    <property type="entry name" value="IMPHPHTASES"/>
</dbReference>
<dbReference type="PRINTS" id="PR00378">
    <property type="entry name" value="LIIMPHPHTASE"/>
</dbReference>
<dbReference type="SUPFAM" id="SSF56655">
    <property type="entry name" value="Carbohydrate phosphatase"/>
    <property type="match status" value="1"/>
</dbReference>
<dbReference type="PROSITE" id="PS00629">
    <property type="entry name" value="IMP_1"/>
    <property type="match status" value="1"/>
</dbReference>
<dbReference type="PROSITE" id="PS00630">
    <property type="entry name" value="IMP_2"/>
    <property type="match status" value="1"/>
</dbReference>
<reference key="1">
    <citation type="journal article" date="1997" name="Mol. Psychiatry">
        <title>A novel human myo-inositol monophosphatase gene, IMP.18p, maps to a susceptibility region for bipolar disorder.</title>
        <authorList>
            <person name="Yoshikawa T."/>
            <person name="Turner G."/>
            <person name="Esterling L.E."/>
            <person name="Sanders A.R."/>
            <person name="Detera-Wadleigh S.D."/>
        </authorList>
    </citation>
    <scope>NUCLEOTIDE SEQUENCE [MRNA] (ISOFORM 1)</scope>
</reference>
<reference key="2">
    <citation type="journal article" date="2000" name="Mol. Psychiatry">
        <title>A human myo-inositol monophosphatase gene (IMPA2) localized in a putative susceptibility region for bipolar disorder on chromosome 18p11.2: genomic structure and polymorphism screening in manic-depressive patients.</title>
        <authorList>
            <person name="Sjoeholt G."/>
            <person name="Gulbrandsen A.K."/>
            <person name="Lovlie R."/>
            <person name="Berle J."/>
            <person name="Molven A."/>
            <person name="Steen V.M."/>
        </authorList>
    </citation>
    <scope>NUCLEOTIDE SEQUENCE [GENOMIC DNA]</scope>
</reference>
<reference key="3">
    <citation type="submission" date="1999-10" db="EMBL/GenBank/DDBJ databases">
        <title>Molecular characterization of a novel form of human brain inositol monophosphatase A2b.</title>
        <authorList>
            <person name="Parthasarathy L."/>
            <person name="Parthasarathy R."/>
        </authorList>
    </citation>
    <scope>NUCLEOTIDE SEQUENCE [MRNA] (ISOFORM 2)</scope>
</reference>
<reference key="4">
    <citation type="submission" date="2003-05" db="EMBL/GenBank/DDBJ databases">
        <title>Cloning of human full-length CDSs in BD Creator(TM) system donor vector.</title>
        <authorList>
            <person name="Kalnine N."/>
            <person name="Chen X."/>
            <person name="Rolfs A."/>
            <person name="Halleck A."/>
            <person name="Hines L."/>
            <person name="Eisenstein S."/>
            <person name="Koundinya M."/>
            <person name="Raphael J."/>
            <person name="Moreira D."/>
            <person name="Kelley T."/>
            <person name="LaBaer J."/>
            <person name="Lin Y."/>
            <person name="Phelan M."/>
            <person name="Farmer A."/>
        </authorList>
    </citation>
    <scope>NUCLEOTIDE SEQUENCE [LARGE SCALE MRNA] (ISOFORM 1)</scope>
</reference>
<reference key="5">
    <citation type="submission" date="2007-02" db="EMBL/GenBank/DDBJ databases">
        <authorList>
            <consortium name="NHLBI resequencing and genotyping service (RS&amp;G)"/>
        </authorList>
    </citation>
    <scope>NUCLEOTIDE SEQUENCE [GENOMIC DNA]</scope>
</reference>
<reference key="6">
    <citation type="submission" date="2005-09" db="EMBL/GenBank/DDBJ databases">
        <authorList>
            <person name="Mural R.J."/>
            <person name="Istrail S."/>
            <person name="Sutton G.G."/>
            <person name="Florea L."/>
            <person name="Halpern A.L."/>
            <person name="Mobarry C.M."/>
            <person name="Lippert R."/>
            <person name="Walenz B."/>
            <person name="Shatkay H."/>
            <person name="Dew I."/>
            <person name="Miller J.R."/>
            <person name="Flanigan M.J."/>
            <person name="Edwards N.J."/>
            <person name="Bolanos R."/>
            <person name="Fasulo D."/>
            <person name="Halldorsson B.V."/>
            <person name="Hannenhalli S."/>
            <person name="Turner R."/>
            <person name="Yooseph S."/>
            <person name="Lu F."/>
            <person name="Nusskern D.R."/>
            <person name="Shue B.C."/>
            <person name="Zheng X.H."/>
            <person name="Zhong F."/>
            <person name="Delcher A.L."/>
            <person name="Huson D.H."/>
            <person name="Kravitz S.A."/>
            <person name="Mouchard L."/>
            <person name="Reinert K."/>
            <person name="Remington K.A."/>
            <person name="Clark A.G."/>
            <person name="Waterman M.S."/>
            <person name="Eichler E.E."/>
            <person name="Adams M.D."/>
            <person name="Hunkapiller M.W."/>
            <person name="Myers E.W."/>
            <person name="Venter J.C."/>
        </authorList>
    </citation>
    <scope>NUCLEOTIDE SEQUENCE [LARGE SCALE GENOMIC DNA]</scope>
</reference>
<reference key="7">
    <citation type="journal article" date="2004" name="Genome Res.">
        <title>The status, quality, and expansion of the NIH full-length cDNA project: the Mammalian Gene Collection (MGC).</title>
        <authorList>
            <consortium name="The MGC Project Team"/>
        </authorList>
    </citation>
    <scope>NUCLEOTIDE SEQUENCE [LARGE SCALE MRNA] (ISOFORM 1)</scope>
    <source>
        <tissue>Skin</tissue>
    </source>
</reference>
<reference key="8">
    <citation type="journal article" date="2004" name="Biochem. Biophys. Res. Commun.">
        <title>Lithium modulation of the human inositol monophosphatase 2 (IMPA2) promoter.</title>
        <authorList>
            <person name="Seelan R.S."/>
            <person name="Parthasarathy L.K."/>
            <person name="Parthasarathy R.N."/>
        </authorList>
    </citation>
    <scope>INDUCTION</scope>
</reference>
<reference key="9">
    <citation type="journal article" date="2007" name="J. Biol. Chem.">
        <title>Spatial expression patterns and biochemical properties distinguish a second myo-inositol monophosphatase IMPA2 from IMPA1.</title>
        <authorList>
            <person name="Ohnishi T."/>
            <person name="Ohba H."/>
            <person name="Seo K.-C."/>
            <person name="Im J."/>
            <person name="Sato Y."/>
            <person name="Iwayama Y."/>
            <person name="Furuichi T."/>
            <person name="Chung S.-K."/>
            <person name="Yoshikawa T."/>
        </authorList>
    </citation>
    <scope>FUNCTION</scope>
    <scope>MUTAGENESIS OF ASP-104</scope>
    <scope>ACTIVITY REGULATION</scope>
    <scope>COFACTOR</scope>
    <scope>BIOPHYSICOCHEMICAL PROPERTIES</scope>
    <scope>SUBUNIT</scope>
    <scope>SUBCELLULAR LOCATION</scope>
    <scope>CATALYTIC ACTIVITY</scope>
</reference>
<reference key="10">
    <citation type="journal article" date="2011" name="BMC Syst. Biol.">
        <title>Initial characterization of the human central proteome.</title>
        <authorList>
            <person name="Burkard T.R."/>
            <person name="Planyavsky M."/>
            <person name="Kaupe I."/>
            <person name="Breitwieser F.P."/>
            <person name="Buerckstuemmer T."/>
            <person name="Bennett K.L."/>
            <person name="Superti-Furga G."/>
            <person name="Colinge J."/>
        </authorList>
    </citation>
    <scope>IDENTIFICATION BY MASS SPECTROMETRY [LARGE SCALE ANALYSIS]</scope>
</reference>
<reference key="11">
    <citation type="journal article" date="2007" name="Proteins">
        <title>Crystal structure of human myo-inositol monophosphatase 2, the product of the putative susceptibility gene for bipolar disorder, schizophrenia, and febrile seizures.</title>
        <authorList>
            <person name="Arai R."/>
            <person name="Ito K."/>
            <person name="Ohnishi T."/>
            <person name="Ohba H."/>
            <person name="Akasaka R."/>
            <person name="Bessho Y."/>
            <person name="Hanawa-Suetsugu K."/>
            <person name="Yoshikawa T."/>
            <person name="Shirouzu M."/>
            <person name="Yokoyama S."/>
        </authorList>
    </citation>
    <scope>X-RAY CRYSTALLOGRAPHY (2.7 ANGSTROMS) IN COMPLEX WITH SUBSTRATE</scope>
    <scope>HOMODIMERIZATION</scope>
</reference>
<reference key="12">
    <citation type="submission" date="2009-02" db="PDB data bank">
        <title>Structure of human inositol monophosphatase 2.</title>
        <authorList>
            <consortium name="Structural genomics consortium (SGC)"/>
        </authorList>
    </citation>
    <scope>X-RAY CRYSTALLOGRAPHY (2.4 ANGSTROMS) OF 16-288</scope>
</reference>
<protein>
    <recommendedName>
        <fullName>Inositol monophosphatase 2</fullName>
        <shortName>IMP 2</shortName>
        <shortName>IMPase 2</shortName>
        <ecNumber evidence="4">3.1.3.25</ecNumber>
    </recommendedName>
    <alternativeName>
        <fullName>Inositol-1(or 4)-monophosphatase 2</fullName>
    </alternativeName>
    <alternativeName>
        <fullName>Myo-inositol monophosphatase A2</fullName>
    </alternativeName>
</protein>
<proteinExistence type="evidence at protein level"/>
<comment type="function">
    <text evidence="4">Phosphatase that can use myo-inositol monophosphates, myo-inositol 1,4-diphosphate, scyllo-inositol-1,4-diphosphate, glucose-1-phosphate, beta-glycerophosphate and 2'-AMP as substrates in vitro (PubMed:17068342). It is likely that IMPA2 has an as yet unidentified in vivo substrate(s) (PubMed:17068342). Has been implicated as the pharmacological target for lithium (Li(+)) action in brain (PubMed:17068342).</text>
</comment>
<comment type="catalytic activity">
    <reaction evidence="4">
        <text>a myo-inositol phosphate + H2O = myo-inositol + phosphate</text>
        <dbReference type="Rhea" id="RHEA:24056"/>
        <dbReference type="ChEBI" id="CHEBI:15377"/>
        <dbReference type="ChEBI" id="CHEBI:17268"/>
        <dbReference type="ChEBI" id="CHEBI:43474"/>
        <dbReference type="ChEBI" id="CHEBI:84139"/>
        <dbReference type="EC" id="3.1.3.25"/>
    </reaction>
    <physiologicalReaction direction="left-to-right" evidence="8">
        <dbReference type="Rhea" id="RHEA:24057"/>
    </physiologicalReaction>
</comment>
<comment type="catalytic activity">
    <reaction evidence="4">
        <text>1D-myo-inositol 1-phosphate + H2O = myo-inositol + phosphate</text>
        <dbReference type="Rhea" id="RHEA:27670"/>
        <dbReference type="ChEBI" id="CHEBI:15377"/>
        <dbReference type="ChEBI" id="CHEBI:17268"/>
        <dbReference type="ChEBI" id="CHEBI:43474"/>
        <dbReference type="ChEBI" id="CHEBI:58433"/>
        <dbReference type="EC" id="3.1.3.25"/>
    </reaction>
    <physiologicalReaction direction="left-to-right" evidence="8">
        <dbReference type="Rhea" id="RHEA:27671"/>
    </physiologicalReaction>
</comment>
<comment type="catalytic activity">
    <reaction evidence="4">
        <text>1D-myo-inositol 2-phosphate + H2O = myo-inositol + phosphate</text>
        <dbReference type="Rhea" id="RHEA:44152"/>
        <dbReference type="ChEBI" id="CHEBI:15377"/>
        <dbReference type="ChEBI" id="CHEBI:17268"/>
        <dbReference type="ChEBI" id="CHEBI:43474"/>
        <dbReference type="ChEBI" id="CHEBI:84142"/>
        <dbReference type="EC" id="3.1.3.25"/>
    </reaction>
    <physiologicalReaction direction="left-to-right" evidence="8">
        <dbReference type="Rhea" id="RHEA:44153"/>
    </physiologicalReaction>
</comment>
<comment type="catalytic activity">
    <reaction evidence="4">
        <text>1D-myo-inositol 3-phosphate + H2O = myo-inositol + phosphate</text>
        <dbReference type="Rhea" id="RHEA:30739"/>
        <dbReference type="ChEBI" id="CHEBI:15377"/>
        <dbReference type="ChEBI" id="CHEBI:17268"/>
        <dbReference type="ChEBI" id="CHEBI:43474"/>
        <dbReference type="ChEBI" id="CHEBI:58401"/>
        <dbReference type="EC" id="3.1.3.25"/>
    </reaction>
    <physiologicalReaction direction="left-to-right" evidence="8">
        <dbReference type="Rhea" id="RHEA:30740"/>
    </physiologicalReaction>
</comment>
<comment type="catalytic activity">
    <reaction evidence="4">
        <text>1D-myo-inositol 4-phosphate + H2O = myo-inositol + phosphate</text>
        <dbReference type="Rhea" id="RHEA:30735"/>
        <dbReference type="ChEBI" id="CHEBI:15377"/>
        <dbReference type="ChEBI" id="CHEBI:17268"/>
        <dbReference type="ChEBI" id="CHEBI:43474"/>
        <dbReference type="ChEBI" id="CHEBI:58469"/>
        <dbReference type="EC" id="3.1.3.25"/>
    </reaction>
    <physiologicalReaction direction="left-to-right" evidence="8">
        <dbReference type="Rhea" id="RHEA:30736"/>
    </physiologicalReaction>
</comment>
<comment type="catalytic activity">
    <reaction evidence="4">
        <text>1D-myo-inositol 5-phosphate + H2O = myo-inositol + phosphate</text>
        <dbReference type="Rhea" id="RHEA:44156"/>
        <dbReference type="ChEBI" id="CHEBI:15377"/>
        <dbReference type="ChEBI" id="CHEBI:17268"/>
        <dbReference type="ChEBI" id="CHEBI:43474"/>
        <dbReference type="ChEBI" id="CHEBI:84141"/>
        <dbReference type="EC" id="3.1.3.25"/>
    </reaction>
    <physiologicalReaction direction="left-to-right" evidence="8">
        <dbReference type="Rhea" id="RHEA:44157"/>
    </physiologicalReaction>
</comment>
<comment type="catalytic activity">
    <reaction evidence="4">
        <text>1D-myo-inositol 6-phosphate + H2O = myo-inositol + phosphate</text>
        <dbReference type="Rhea" id="RHEA:44160"/>
        <dbReference type="ChEBI" id="CHEBI:15377"/>
        <dbReference type="ChEBI" id="CHEBI:17268"/>
        <dbReference type="ChEBI" id="CHEBI:43474"/>
        <dbReference type="ChEBI" id="CHEBI:64841"/>
        <dbReference type="EC" id="3.1.3.25"/>
    </reaction>
    <physiologicalReaction direction="left-to-right" evidence="8">
        <dbReference type="Rhea" id="RHEA:44161"/>
    </physiologicalReaction>
</comment>
<comment type="catalytic activity">
    <reaction evidence="4">
        <text>alpha-D-glucose 1-phosphate + H2O = D-glucose + phosphate</text>
        <dbReference type="Rhea" id="RHEA:19933"/>
        <dbReference type="ChEBI" id="CHEBI:4167"/>
        <dbReference type="ChEBI" id="CHEBI:15377"/>
        <dbReference type="ChEBI" id="CHEBI:43474"/>
        <dbReference type="ChEBI" id="CHEBI:58601"/>
    </reaction>
    <physiologicalReaction direction="left-to-right" evidence="8">
        <dbReference type="Rhea" id="RHEA:19934"/>
    </physiologicalReaction>
</comment>
<comment type="catalytic activity">
    <reaction evidence="4">
        <text>glycerol 2-phosphate + H2O = glycerol + phosphate</text>
        <dbReference type="Rhea" id="RHEA:13105"/>
        <dbReference type="ChEBI" id="CHEBI:15377"/>
        <dbReference type="ChEBI" id="CHEBI:17754"/>
        <dbReference type="ChEBI" id="CHEBI:43474"/>
        <dbReference type="ChEBI" id="CHEBI:58083"/>
    </reaction>
    <physiologicalReaction direction="left-to-right" evidence="8">
        <dbReference type="Rhea" id="RHEA:13106"/>
    </physiologicalReaction>
</comment>
<comment type="catalytic activity">
    <reaction evidence="4">
        <text>adenosine 2'-phosphate + H2O = adenosine + phosphate</text>
        <dbReference type="Rhea" id="RHEA:37343"/>
        <dbReference type="ChEBI" id="CHEBI:15377"/>
        <dbReference type="ChEBI" id="CHEBI:16335"/>
        <dbReference type="ChEBI" id="CHEBI:43474"/>
        <dbReference type="ChEBI" id="CHEBI:77740"/>
    </reaction>
    <physiologicalReaction direction="left-to-right" evidence="8">
        <dbReference type="Rhea" id="RHEA:37344"/>
    </physiologicalReaction>
</comment>
<comment type="cofactor">
    <cofactor evidence="4">
        <name>Mg(2+)</name>
        <dbReference type="ChEBI" id="CHEBI:18420"/>
    </cofactor>
</comment>
<comment type="activity regulation">
    <text evidence="4">Inhibited by high Li(+) and restricted Mg(2+) concentrations.</text>
</comment>
<comment type="biophysicochemical properties">
    <kinetics>
        <KM evidence="4">5 mM for myo-inositol 1-monophosphate</KM>
        <text evidence="4">Inositol monophosphatase activity is less efficient than for IMPA1.</text>
    </kinetics>
    <phDependence>
        <text evidence="4">Optimum pH is 7.5-8.0.</text>
    </phDependence>
</comment>
<comment type="pathway">
    <text>Polyol metabolism; myo-inositol biosynthesis; myo-inositol from D-glucose 6-phosphate: step 2/2.</text>
</comment>
<comment type="subunit">
    <text evidence="4 5">Homodimer.</text>
</comment>
<comment type="interaction">
    <interactant intactId="EBI-725233">
        <id>O14732</id>
    </interactant>
    <interactant intactId="EBI-752410">
        <id>P29218</id>
        <label>IMPA1</label>
    </interactant>
    <organismsDiffer>false</organismsDiffer>
    <experiments>4</experiments>
</comment>
<comment type="interaction">
    <interactant intactId="EBI-725233">
        <id>O14732</id>
    </interactant>
    <interactant intactId="EBI-12330251">
        <id>P29218-3</id>
        <label>IMPA1</label>
    </interactant>
    <organismsDiffer>false</organismsDiffer>
    <experiments>3</experiments>
</comment>
<comment type="interaction">
    <interactant intactId="EBI-725233">
        <id>O14732</id>
    </interactant>
    <interactant intactId="EBI-12056955">
        <id>Q8N4M1-3</id>
        <label>SLC44A3</label>
    </interactant>
    <organismsDiffer>false</organismsDiffer>
    <experiments>3</experiments>
</comment>
<comment type="interaction">
    <interactant intactId="EBI-725233">
        <id>O14732</id>
    </interactant>
    <interactant intactId="EBI-717567">
        <id>Q8TBC4</id>
        <label>UBA3</label>
    </interactant>
    <organismsDiffer>false</organismsDiffer>
    <experiments>6</experiments>
</comment>
<comment type="subcellular location">
    <subcellularLocation>
        <location evidence="4">Cytoplasm</location>
    </subcellularLocation>
</comment>
<comment type="alternative products">
    <event type="alternative splicing"/>
    <isoform>
        <id>O14732-1</id>
        <name>1</name>
        <sequence type="displayed"/>
    </isoform>
    <isoform>
        <id>O14732-2</id>
        <name>2</name>
        <name>A2b</name>
        <sequence type="described" ref="VSP_013674"/>
    </isoform>
</comment>
<comment type="induction">
    <text evidence="3">Repressed by Li(+).</text>
</comment>
<comment type="similarity">
    <text evidence="7">Belongs to the inositol monophosphatase superfamily.</text>
</comment>
<keyword id="KW-0002">3D-structure</keyword>
<keyword id="KW-0025">Alternative splicing</keyword>
<keyword id="KW-0963">Cytoplasm</keyword>
<keyword id="KW-0378">Hydrolase</keyword>
<keyword id="KW-0460">Magnesium</keyword>
<keyword id="KW-0479">Metal-binding</keyword>
<keyword id="KW-1267">Proteomics identification</keyword>
<keyword id="KW-1185">Reference proteome</keyword>
<gene>
    <name evidence="9" type="primary">IMPA2</name>
    <name type="synonym">IMP.18P</name>
</gene>